<reference key="1">
    <citation type="journal article" date="2011" name="Appl. Environ. Microbiol.">
        <title>Genomic potential of Marinobacter aquaeolei, a biogeochemical 'opportunitroph'.</title>
        <authorList>
            <person name="Singer E."/>
            <person name="Webb E.A."/>
            <person name="Nelson W.C."/>
            <person name="Heidelberg J.F."/>
            <person name="Ivanova N."/>
            <person name="Pati A."/>
            <person name="Edwards K.J."/>
        </authorList>
    </citation>
    <scope>NUCLEOTIDE SEQUENCE [LARGE SCALE GENOMIC DNA]</scope>
    <source>
        <strain>ATCC 700491 / DSM 11845 / VT8</strain>
    </source>
</reference>
<comment type="function">
    <text evidence="1">Catalyzes the biosynthesis of agmatine from arginine.</text>
</comment>
<comment type="catalytic activity">
    <reaction evidence="1">
        <text>L-arginine + H(+) = agmatine + CO2</text>
        <dbReference type="Rhea" id="RHEA:17641"/>
        <dbReference type="ChEBI" id="CHEBI:15378"/>
        <dbReference type="ChEBI" id="CHEBI:16526"/>
        <dbReference type="ChEBI" id="CHEBI:32682"/>
        <dbReference type="ChEBI" id="CHEBI:58145"/>
        <dbReference type="EC" id="4.1.1.19"/>
    </reaction>
</comment>
<comment type="cofactor">
    <cofactor evidence="1">
        <name>Mg(2+)</name>
        <dbReference type="ChEBI" id="CHEBI:18420"/>
    </cofactor>
</comment>
<comment type="cofactor">
    <cofactor evidence="1">
        <name>pyridoxal 5'-phosphate</name>
        <dbReference type="ChEBI" id="CHEBI:597326"/>
    </cofactor>
</comment>
<comment type="pathway">
    <text evidence="1">Amine and polyamine biosynthesis; agmatine biosynthesis; agmatine from L-arginine: step 1/1.</text>
</comment>
<comment type="similarity">
    <text evidence="1">Belongs to the Orn/Lys/Arg decarboxylase class-II family. SpeA subfamily.</text>
</comment>
<feature type="chain" id="PRO_1000024257" description="Biosynthetic arginine decarboxylase">
    <location>
        <begin position="1"/>
        <end position="637"/>
    </location>
</feature>
<feature type="binding site" evidence="1">
    <location>
        <begin position="286"/>
        <end position="296"/>
    </location>
    <ligand>
        <name>substrate</name>
    </ligand>
</feature>
<feature type="modified residue" description="N6-(pyridoxal phosphate)lysine" evidence="1">
    <location>
        <position position="101"/>
    </location>
</feature>
<gene>
    <name evidence="1" type="primary">speA</name>
    <name type="ordered locus">Maqu_0520</name>
</gene>
<name>SPEA_MARN8</name>
<protein>
    <recommendedName>
        <fullName evidence="1">Biosynthetic arginine decarboxylase</fullName>
        <shortName evidence="1">ADC</shortName>
        <ecNumber evidence="1">4.1.1.19</ecNumber>
    </recommendedName>
</protein>
<dbReference type="EC" id="4.1.1.19" evidence="1"/>
<dbReference type="EMBL" id="CP000514">
    <property type="protein sequence ID" value="ABM17621.1"/>
    <property type="molecule type" value="Genomic_DNA"/>
</dbReference>
<dbReference type="RefSeq" id="WP_011784065.1">
    <property type="nucleotide sequence ID" value="NC_008740.1"/>
</dbReference>
<dbReference type="SMR" id="A1TY02"/>
<dbReference type="STRING" id="351348.Maqu_0520"/>
<dbReference type="KEGG" id="maq:Maqu_0520"/>
<dbReference type="eggNOG" id="COG1166">
    <property type="taxonomic scope" value="Bacteria"/>
</dbReference>
<dbReference type="HOGENOM" id="CLU_027243_1_0_6"/>
<dbReference type="OrthoDB" id="9802658at2"/>
<dbReference type="UniPathway" id="UPA00186">
    <property type="reaction ID" value="UER00284"/>
</dbReference>
<dbReference type="Proteomes" id="UP000000998">
    <property type="component" value="Chromosome"/>
</dbReference>
<dbReference type="GO" id="GO:0008792">
    <property type="term" value="F:arginine decarboxylase activity"/>
    <property type="evidence" value="ECO:0007669"/>
    <property type="project" value="UniProtKB-UniRule"/>
</dbReference>
<dbReference type="GO" id="GO:0046872">
    <property type="term" value="F:metal ion binding"/>
    <property type="evidence" value="ECO:0007669"/>
    <property type="project" value="UniProtKB-KW"/>
</dbReference>
<dbReference type="GO" id="GO:0006527">
    <property type="term" value="P:arginine catabolic process"/>
    <property type="evidence" value="ECO:0007669"/>
    <property type="project" value="InterPro"/>
</dbReference>
<dbReference type="GO" id="GO:0033388">
    <property type="term" value="P:putrescine biosynthetic process from arginine"/>
    <property type="evidence" value="ECO:0007669"/>
    <property type="project" value="TreeGrafter"/>
</dbReference>
<dbReference type="GO" id="GO:0008295">
    <property type="term" value="P:spermidine biosynthetic process"/>
    <property type="evidence" value="ECO:0007669"/>
    <property type="project" value="UniProtKB-UniRule"/>
</dbReference>
<dbReference type="CDD" id="cd06830">
    <property type="entry name" value="PLPDE_III_ADC"/>
    <property type="match status" value="1"/>
</dbReference>
<dbReference type="FunFam" id="3.20.20.10:FF:000001">
    <property type="entry name" value="Biosynthetic arginine decarboxylase"/>
    <property type="match status" value="1"/>
</dbReference>
<dbReference type="Gene3D" id="1.10.287.3440">
    <property type="match status" value="1"/>
</dbReference>
<dbReference type="Gene3D" id="1.20.58.930">
    <property type="match status" value="1"/>
</dbReference>
<dbReference type="Gene3D" id="3.20.20.10">
    <property type="entry name" value="Alanine racemase"/>
    <property type="match status" value="1"/>
</dbReference>
<dbReference type="Gene3D" id="2.40.37.10">
    <property type="entry name" value="Lyase, Ornithine Decarboxylase, Chain A, domain 1"/>
    <property type="match status" value="1"/>
</dbReference>
<dbReference type="HAMAP" id="MF_01417">
    <property type="entry name" value="SpeA"/>
    <property type="match status" value="1"/>
</dbReference>
<dbReference type="InterPro" id="IPR009006">
    <property type="entry name" value="Ala_racemase/Decarboxylase_C"/>
</dbReference>
<dbReference type="InterPro" id="IPR040634">
    <property type="entry name" value="Arg_decarb_HB"/>
</dbReference>
<dbReference type="InterPro" id="IPR041128">
    <property type="entry name" value="Arg_decarbox_C"/>
</dbReference>
<dbReference type="InterPro" id="IPR002985">
    <property type="entry name" value="Arg_decrbxlase"/>
</dbReference>
<dbReference type="InterPro" id="IPR022644">
    <property type="entry name" value="De-COase2_N"/>
</dbReference>
<dbReference type="InterPro" id="IPR022653">
    <property type="entry name" value="De-COase2_pyr-phos_BS"/>
</dbReference>
<dbReference type="InterPro" id="IPR000183">
    <property type="entry name" value="Orn/DAP/Arg_de-COase"/>
</dbReference>
<dbReference type="InterPro" id="IPR029066">
    <property type="entry name" value="PLP-binding_barrel"/>
</dbReference>
<dbReference type="NCBIfam" id="NF003763">
    <property type="entry name" value="PRK05354.1"/>
    <property type="match status" value="1"/>
</dbReference>
<dbReference type="NCBIfam" id="TIGR01273">
    <property type="entry name" value="speA"/>
    <property type="match status" value="1"/>
</dbReference>
<dbReference type="PANTHER" id="PTHR43295">
    <property type="entry name" value="ARGININE DECARBOXYLASE"/>
    <property type="match status" value="1"/>
</dbReference>
<dbReference type="PANTHER" id="PTHR43295:SF9">
    <property type="entry name" value="BIOSYNTHETIC ARGININE DECARBOXYLASE"/>
    <property type="match status" value="1"/>
</dbReference>
<dbReference type="Pfam" id="PF17810">
    <property type="entry name" value="Arg_decarb_HB"/>
    <property type="match status" value="1"/>
</dbReference>
<dbReference type="Pfam" id="PF17944">
    <property type="entry name" value="Arg_decarbox_C"/>
    <property type="match status" value="1"/>
</dbReference>
<dbReference type="Pfam" id="PF02784">
    <property type="entry name" value="Orn_Arg_deC_N"/>
    <property type="match status" value="1"/>
</dbReference>
<dbReference type="PIRSF" id="PIRSF001336">
    <property type="entry name" value="Arg_decrbxlase"/>
    <property type="match status" value="1"/>
</dbReference>
<dbReference type="PRINTS" id="PR01180">
    <property type="entry name" value="ARGDCRBXLASE"/>
</dbReference>
<dbReference type="PRINTS" id="PR01179">
    <property type="entry name" value="ODADCRBXLASE"/>
</dbReference>
<dbReference type="SUPFAM" id="SSF50621">
    <property type="entry name" value="Alanine racemase C-terminal domain-like"/>
    <property type="match status" value="1"/>
</dbReference>
<dbReference type="SUPFAM" id="SSF51419">
    <property type="entry name" value="PLP-binding barrel"/>
    <property type="match status" value="1"/>
</dbReference>
<dbReference type="PROSITE" id="PS00878">
    <property type="entry name" value="ODR_DC_2_1"/>
    <property type="match status" value="1"/>
</dbReference>
<dbReference type="PROSITE" id="PS00879">
    <property type="entry name" value="ODR_DC_2_2"/>
    <property type="match status" value="1"/>
</dbReference>
<sequence length="637" mass="70502">MAETAASPAHKVYNIAHWSDGYISVNGQGEVEICPDRGRSDARINLPALTRSLAEAGVPLPVLIRFTDILHDRVNKLCNAFNKVTQEQGYRGRYTAVYPIKVNQQRRVVEELLSAEPAASANQVGLEAGSKPELMAVLALAKQAGSVIVCNGYKDREYIRLALIGQKLGHRVFIVVEKQSELPLILEEAKKLGISPLIGVRARLATIGKGNWQNTGGEKSKFGLSASQVLDVVDTLKQAGALGTLQLLHFHLGSQIANIRDIQTGLRECARFYTELHAMGAPIGTVDIGGGLGVDYEGTRSRSSCSMNYSVFEYAYNVVHVLQSECDRQGIPHPDLISESGRALTAHHSVLVTNVIDREYPDNREPTEPAAEAPAPLQDLWRDLESLQDEDSPRSLAEIYHDILHAMADVHAQFAHGLLSLQERAQAETLYVRCCRMLRAELDSANRAHREIIDELNEKLAEKLFVNFSLFQSLPDVWGIDQIFPVMPINGLNRSLNRRAVIQDITCDSDGRIDQYVDGQGIETTLPLPEHDPESPLLMGFFMTGAYQEILGDMHNLFGDTHSVDVKLDQQGQYQVGEPITGDTVAKVLRYVNFEPANLLEAYRQKFRHSGLSEELQQTLLAELSSGLEGYTYLEEG</sequence>
<keyword id="KW-0210">Decarboxylase</keyword>
<keyword id="KW-0456">Lyase</keyword>
<keyword id="KW-0460">Magnesium</keyword>
<keyword id="KW-0479">Metal-binding</keyword>
<keyword id="KW-0620">Polyamine biosynthesis</keyword>
<keyword id="KW-0663">Pyridoxal phosphate</keyword>
<keyword id="KW-0745">Spermidine biosynthesis</keyword>
<accession>A1TY02</accession>
<evidence type="ECO:0000255" key="1">
    <source>
        <dbReference type="HAMAP-Rule" id="MF_01417"/>
    </source>
</evidence>
<organism>
    <name type="scientific">Marinobacter nauticus (strain ATCC 700491 / DSM 11845 / VT8)</name>
    <name type="common">Marinobacter aquaeolei</name>
    <dbReference type="NCBI Taxonomy" id="351348"/>
    <lineage>
        <taxon>Bacteria</taxon>
        <taxon>Pseudomonadati</taxon>
        <taxon>Pseudomonadota</taxon>
        <taxon>Gammaproteobacteria</taxon>
        <taxon>Pseudomonadales</taxon>
        <taxon>Marinobacteraceae</taxon>
        <taxon>Marinobacter</taxon>
    </lineage>
</organism>
<proteinExistence type="inferred from homology"/>